<dbReference type="EMBL" id="BA000017">
    <property type="protein sequence ID" value="BAB57388.1"/>
    <property type="molecule type" value="Genomic_DNA"/>
</dbReference>
<dbReference type="SMR" id="Q99UP2"/>
<dbReference type="KEGG" id="sav:SAV1226"/>
<dbReference type="HOGENOM" id="CLU_017496_1_0_9"/>
<dbReference type="PhylomeDB" id="Q99UP2"/>
<dbReference type="Proteomes" id="UP000002481">
    <property type="component" value="Chromosome"/>
</dbReference>
<dbReference type="GO" id="GO:0004371">
    <property type="term" value="F:glycerone kinase activity"/>
    <property type="evidence" value="ECO:0007669"/>
    <property type="project" value="InterPro"/>
</dbReference>
<dbReference type="GO" id="GO:0006071">
    <property type="term" value="P:glycerol metabolic process"/>
    <property type="evidence" value="ECO:0007669"/>
    <property type="project" value="InterPro"/>
</dbReference>
<dbReference type="Gene3D" id="1.25.40.340">
    <property type="match status" value="1"/>
</dbReference>
<dbReference type="InterPro" id="IPR050270">
    <property type="entry name" value="DegV_domain_contain"/>
</dbReference>
<dbReference type="InterPro" id="IPR004007">
    <property type="entry name" value="DhaL_dom"/>
</dbReference>
<dbReference type="InterPro" id="IPR036117">
    <property type="entry name" value="DhaL_dom_sf"/>
</dbReference>
<dbReference type="InterPro" id="IPR033470">
    <property type="entry name" value="FakA-like_C"/>
</dbReference>
<dbReference type="InterPro" id="IPR048394">
    <property type="entry name" value="FakA-like_M"/>
</dbReference>
<dbReference type="InterPro" id="IPR019986">
    <property type="entry name" value="YloV-like"/>
</dbReference>
<dbReference type="NCBIfam" id="NF038248">
    <property type="entry name" value="FakA_VfrB"/>
    <property type="match status" value="1"/>
</dbReference>
<dbReference type="NCBIfam" id="TIGR03599">
    <property type="entry name" value="YloV"/>
    <property type="match status" value="1"/>
</dbReference>
<dbReference type="PANTHER" id="PTHR33434">
    <property type="entry name" value="DEGV DOMAIN-CONTAINING PROTEIN DR_1986-RELATED"/>
    <property type="match status" value="1"/>
</dbReference>
<dbReference type="PANTHER" id="PTHR33434:SF4">
    <property type="entry name" value="PHOSPHATASE PROTEIN"/>
    <property type="match status" value="1"/>
</dbReference>
<dbReference type="Pfam" id="PF02734">
    <property type="entry name" value="Dak2"/>
    <property type="match status" value="1"/>
</dbReference>
<dbReference type="Pfam" id="PF13684">
    <property type="entry name" value="FakA-like_C"/>
    <property type="match status" value="1"/>
</dbReference>
<dbReference type="Pfam" id="PF21645">
    <property type="entry name" value="FakA-like_M"/>
    <property type="match status" value="1"/>
</dbReference>
<dbReference type="SMART" id="SM01121">
    <property type="entry name" value="Dak1_2"/>
    <property type="match status" value="1"/>
</dbReference>
<dbReference type="SMART" id="SM01120">
    <property type="entry name" value="Dak2"/>
    <property type="match status" value="1"/>
</dbReference>
<dbReference type="SUPFAM" id="SSF101473">
    <property type="entry name" value="DhaL-like"/>
    <property type="match status" value="1"/>
</dbReference>
<dbReference type="PROSITE" id="PS51480">
    <property type="entry name" value="DHAL"/>
    <property type="match status" value="1"/>
</dbReference>
<sequence>MISKINGKLFADMIIQGAQNLSNNADLVDSLNVYPVPDGDTGTNMNLTMTSGREEVENNLSKNIGELGKTFSKGLLMGARGNSGVILSQLFRGFCKNIESESEINSKLLAESFQAGVETAYKAVMKPVEGTILTVAKDAAQAAIEKANNTEDCIELMEYIIVKANESLENTPNLLAVLKEVGVVDSGGKGLLCVYEGFLKALKGEKVEAKVAKIDKDEFVHDEHDFHGVINTEDIIYGYCTEMMVRFGKNKKAFDEQEFRQDMSQFGDSLLVINDEEIVKVHVHTEYPGKVFNYGQQYGELIKLKVENMREQHREVIRKEQHTAKPKMETVETAIITISMGEGISEIFKSMGATHIISGGQTMNPSTEDIVKVIEQSKCKRAIILPNNKNILMASEQAASIVDAEAVVIPTKSIPQGISALFQYDVDATLEENKAQMADSVNNVKSGSLTYAVRDTKIDGVEIKKDAFMGLIEDKIVSSQSDQLTTVTELLNEMLAEDSEILTVIIGQDAEQAVTDNMINWIEEQYPDVEVEVHEGGQPIYQYFFSVE</sequence>
<organism>
    <name type="scientific">Staphylococcus aureus (strain Mu50 / ATCC 700699)</name>
    <dbReference type="NCBI Taxonomy" id="158878"/>
    <lineage>
        <taxon>Bacteria</taxon>
        <taxon>Bacillati</taxon>
        <taxon>Bacillota</taxon>
        <taxon>Bacilli</taxon>
        <taxon>Bacillales</taxon>
        <taxon>Staphylococcaceae</taxon>
        <taxon>Staphylococcus</taxon>
    </lineage>
</organism>
<evidence type="ECO:0000255" key="1">
    <source>
        <dbReference type="PROSITE-ProRule" id="PRU00813"/>
    </source>
</evidence>
<feature type="chain" id="PRO_0000304159" description="Uncharacterized protein SAV1226">
    <location>
        <begin position="1"/>
        <end position="548"/>
    </location>
</feature>
<feature type="domain" description="DhaL" evidence="1">
    <location>
        <begin position="8"/>
        <end position="200"/>
    </location>
</feature>
<name>Y1226_STAAM</name>
<proteinExistence type="predicted"/>
<gene>
    <name type="ordered locus">SAV1226</name>
</gene>
<protein>
    <recommendedName>
        <fullName>Uncharacterized protein SAV1226</fullName>
    </recommendedName>
</protein>
<reference key="1">
    <citation type="journal article" date="2001" name="Lancet">
        <title>Whole genome sequencing of meticillin-resistant Staphylococcus aureus.</title>
        <authorList>
            <person name="Kuroda M."/>
            <person name="Ohta T."/>
            <person name="Uchiyama I."/>
            <person name="Baba T."/>
            <person name="Yuzawa H."/>
            <person name="Kobayashi I."/>
            <person name="Cui L."/>
            <person name="Oguchi A."/>
            <person name="Aoki K."/>
            <person name="Nagai Y."/>
            <person name="Lian J.-Q."/>
            <person name="Ito T."/>
            <person name="Kanamori M."/>
            <person name="Matsumaru H."/>
            <person name="Maruyama A."/>
            <person name="Murakami H."/>
            <person name="Hosoyama A."/>
            <person name="Mizutani-Ui Y."/>
            <person name="Takahashi N.K."/>
            <person name="Sawano T."/>
            <person name="Inoue R."/>
            <person name="Kaito C."/>
            <person name="Sekimizu K."/>
            <person name="Hirakawa H."/>
            <person name="Kuhara S."/>
            <person name="Goto S."/>
            <person name="Yabuzaki J."/>
            <person name="Kanehisa M."/>
            <person name="Yamashita A."/>
            <person name="Oshima K."/>
            <person name="Furuya K."/>
            <person name="Yoshino C."/>
            <person name="Shiba T."/>
            <person name="Hattori M."/>
            <person name="Ogasawara N."/>
            <person name="Hayashi H."/>
            <person name="Hiramatsu K."/>
        </authorList>
    </citation>
    <scope>NUCLEOTIDE SEQUENCE [LARGE SCALE GENOMIC DNA]</scope>
    <source>
        <strain>Mu50 / ATCC 700699</strain>
    </source>
</reference>
<accession>Q99UP2</accession>